<comment type="function">
    <text evidence="1">Catalyzes the hydrolysis of UDP-3-O-myristoyl-N-acetylglucosamine to form UDP-3-O-myristoylglucosamine and acetate, the committed step in lipid A biosynthesis.</text>
</comment>
<comment type="catalytic activity">
    <reaction evidence="1">
        <text>a UDP-3-O-[(3R)-3-hydroxyacyl]-N-acetyl-alpha-D-glucosamine + H2O = a UDP-3-O-[(3R)-3-hydroxyacyl]-alpha-D-glucosamine + acetate</text>
        <dbReference type="Rhea" id="RHEA:67816"/>
        <dbReference type="ChEBI" id="CHEBI:15377"/>
        <dbReference type="ChEBI" id="CHEBI:30089"/>
        <dbReference type="ChEBI" id="CHEBI:137740"/>
        <dbReference type="ChEBI" id="CHEBI:173225"/>
        <dbReference type="EC" id="3.5.1.108"/>
    </reaction>
</comment>
<comment type="cofactor">
    <cofactor evidence="1">
        <name>Zn(2+)</name>
        <dbReference type="ChEBI" id="CHEBI:29105"/>
    </cofactor>
</comment>
<comment type="pathway">
    <text evidence="1">Glycolipid biosynthesis; lipid IV(A) biosynthesis; lipid IV(A) from (3R)-3-hydroxytetradecanoyl-[acyl-carrier-protein] and UDP-N-acetyl-alpha-D-glucosamine: step 2/6.</text>
</comment>
<comment type="similarity">
    <text evidence="1">Belongs to the LpxC family.</text>
</comment>
<evidence type="ECO:0000255" key="1">
    <source>
        <dbReference type="HAMAP-Rule" id="MF_00388"/>
    </source>
</evidence>
<gene>
    <name evidence="1" type="primary">lpxC</name>
    <name type="ordered locus">BMEA_A1472</name>
</gene>
<accession>C0RE63</accession>
<sequence length="286" mass="30867">MNAYQKTIGRAVTLSGVGIHGGAPASARLLPADADTGILFQRSDIKDSAPVCAHVSQIGATDLCTSLGAREARIDTVEHLMAAISALGIDNLVVEIEGPEVPILDGTSARFIEAVDSVGVVTQDAKRRFIRILKTVRVEAGNSWGEFRPYDGTRFEVEIDFECPLIGRQKFAHDVDEETFRKELSTARTFGFMKDVERLWAAGLALGASLDNSLVIGDDNSIVNADGLRFKDEFVRHKTLDAVGDLALAGLPFIGCFSSYRGGHRLNSEAVKALLSDETAFEIIEA</sequence>
<keyword id="KW-0378">Hydrolase</keyword>
<keyword id="KW-0441">Lipid A biosynthesis</keyword>
<keyword id="KW-0444">Lipid biosynthesis</keyword>
<keyword id="KW-0443">Lipid metabolism</keyword>
<keyword id="KW-0479">Metal-binding</keyword>
<keyword id="KW-0862">Zinc</keyword>
<reference key="1">
    <citation type="submission" date="2009-03" db="EMBL/GenBank/DDBJ databases">
        <title>Brucella melitensis ATCC 23457 whole genome shotgun sequencing project.</title>
        <authorList>
            <person name="Setubal J.C."/>
            <person name="Boyle S."/>
            <person name="Crasta O.R."/>
            <person name="Gillespie J.J."/>
            <person name="Kenyon R.W."/>
            <person name="Lu J."/>
            <person name="Mane S."/>
            <person name="Nagrani S."/>
            <person name="Shallom J.M."/>
            <person name="Shallom S."/>
            <person name="Shukla M."/>
            <person name="Snyder E.E."/>
            <person name="Sobral B.W."/>
            <person name="Wattam A.R."/>
            <person name="Will R."/>
            <person name="Williams K."/>
            <person name="Yoo H."/>
            <person name="Munk C."/>
            <person name="Tapia R."/>
            <person name="Han C."/>
            <person name="Detter J.C."/>
            <person name="Bruce D."/>
            <person name="Brettin T.S."/>
        </authorList>
    </citation>
    <scope>NUCLEOTIDE SEQUENCE [LARGE SCALE GENOMIC DNA]</scope>
    <source>
        <strain>ATCC 23457</strain>
    </source>
</reference>
<name>LPXC_BRUMB</name>
<proteinExistence type="inferred from homology"/>
<feature type="chain" id="PRO_1000134392" description="UDP-3-O-acyl-N-acetylglucosamine deacetylase">
    <location>
        <begin position="1"/>
        <end position="286"/>
    </location>
</feature>
<feature type="active site" description="Proton donor" evidence="1">
    <location>
        <position position="264"/>
    </location>
</feature>
<feature type="binding site" evidence="1">
    <location>
        <position position="79"/>
    </location>
    <ligand>
        <name>Zn(2+)</name>
        <dbReference type="ChEBI" id="CHEBI:29105"/>
    </ligand>
</feature>
<feature type="binding site" evidence="1">
    <location>
        <position position="237"/>
    </location>
    <ligand>
        <name>Zn(2+)</name>
        <dbReference type="ChEBI" id="CHEBI:29105"/>
    </ligand>
</feature>
<feature type="binding site" evidence="1">
    <location>
        <position position="241"/>
    </location>
    <ligand>
        <name>Zn(2+)</name>
        <dbReference type="ChEBI" id="CHEBI:29105"/>
    </ligand>
</feature>
<dbReference type="EC" id="3.5.1.108" evidence="1"/>
<dbReference type="EMBL" id="CP001488">
    <property type="protein sequence ID" value="ACO01185.1"/>
    <property type="molecule type" value="Genomic_DNA"/>
</dbReference>
<dbReference type="RefSeq" id="WP_004684016.1">
    <property type="nucleotide sequence ID" value="NC_012441.1"/>
</dbReference>
<dbReference type="SMR" id="C0RE63"/>
<dbReference type="GeneID" id="29593377"/>
<dbReference type="KEGG" id="bmi:BMEA_A1472"/>
<dbReference type="HOGENOM" id="CLU_046528_1_1_5"/>
<dbReference type="UniPathway" id="UPA00359">
    <property type="reaction ID" value="UER00478"/>
</dbReference>
<dbReference type="Proteomes" id="UP000001748">
    <property type="component" value="Chromosome I"/>
</dbReference>
<dbReference type="GO" id="GO:0016020">
    <property type="term" value="C:membrane"/>
    <property type="evidence" value="ECO:0007669"/>
    <property type="project" value="GOC"/>
</dbReference>
<dbReference type="GO" id="GO:0046872">
    <property type="term" value="F:metal ion binding"/>
    <property type="evidence" value="ECO:0007669"/>
    <property type="project" value="UniProtKB-KW"/>
</dbReference>
<dbReference type="GO" id="GO:0103117">
    <property type="term" value="F:UDP-3-O-acyl-N-acetylglucosamine deacetylase activity"/>
    <property type="evidence" value="ECO:0007669"/>
    <property type="project" value="UniProtKB-UniRule"/>
</dbReference>
<dbReference type="GO" id="GO:0009245">
    <property type="term" value="P:lipid A biosynthetic process"/>
    <property type="evidence" value="ECO:0007669"/>
    <property type="project" value="UniProtKB-UniRule"/>
</dbReference>
<dbReference type="Gene3D" id="3.30.230.20">
    <property type="entry name" value="lpxc deacetylase, domain 1"/>
    <property type="match status" value="1"/>
</dbReference>
<dbReference type="Gene3D" id="3.30.1700.10">
    <property type="entry name" value="lpxc deacetylase, domain 2"/>
    <property type="match status" value="1"/>
</dbReference>
<dbReference type="HAMAP" id="MF_00388">
    <property type="entry name" value="LpxC"/>
    <property type="match status" value="1"/>
</dbReference>
<dbReference type="InterPro" id="IPR020568">
    <property type="entry name" value="Ribosomal_Su5_D2-typ_SF"/>
</dbReference>
<dbReference type="InterPro" id="IPR004463">
    <property type="entry name" value="UDP-acyl_GlcNac_deAcase"/>
</dbReference>
<dbReference type="InterPro" id="IPR011334">
    <property type="entry name" value="UDP-acyl_GlcNac_deAcase_C"/>
</dbReference>
<dbReference type="InterPro" id="IPR015870">
    <property type="entry name" value="UDP-acyl_N-AcGlcN_deAcase_N"/>
</dbReference>
<dbReference type="NCBIfam" id="TIGR00325">
    <property type="entry name" value="lpxC"/>
    <property type="match status" value="1"/>
</dbReference>
<dbReference type="PANTHER" id="PTHR33694">
    <property type="entry name" value="UDP-3-O-ACYL-N-ACETYLGLUCOSAMINE DEACETYLASE 1, MITOCHONDRIAL-RELATED"/>
    <property type="match status" value="1"/>
</dbReference>
<dbReference type="PANTHER" id="PTHR33694:SF1">
    <property type="entry name" value="UDP-3-O-ACYL-N-ACETYLGLUCOSAMINE DEACETYLASE 1, MITOCHONDRIAL-RELATED"/>
    <property type="match status" value="1"/>
</dbReference>
<dbReference type="Pfam" id="PF03331">
    <property type="entry name" value="LpxC"/>
    <property type="match status" value="1"/>
</dbReference>
<dbReference type="SUPFAM" id="SSF54211">
    <property type="entry name" value="Ribosomal protein S5 domain 2-like"/>
    <property type="match status" value="2"/>
</dbReference>
<protein>
    <recommendedName>
        <fullName evidence="1">UDP-3-O-acyl-N-acetylglucosamine deacetylase</fullName>
        <shortName evidence="1">UDP-3-O-acyl-GlcNAc deacetylase</shortName>
        <ecNumber evidence="1">3.5.1.108</ecNumber>
    </recommendedName>
    <alternativeName>
        <fullName evidence="1">UDP-3-O-[R-3-hydroxymyristoyl]-N-acetylglucosamine deacetylase</fullName>
    </alternativeName>
</protein>
<organism>
    <name type="scientific">Brucella melitensis biotype 2 (strain ATCC 23457)</name>
    <dbReference type="NCBI Taxonomy" id="546272"/>
    <lineage>
        <taxon>Bacteria</taxon>
        <taxon>Pseudomonadati</taxon>
        <taxon>Pseudomonadota</taxon>
        <taxon>Alphaproteobacteria</taxon>
        <taxon>Hyphomicrobiales</taxon>
        <taxon>Brucellaceae</taxon>
        <taxon>Brucella/Ochrobactrum group</taxon>
        <taxon>Brucella</taxon>
    </lineage>
</organism>